<keyword id="KW-0903">Direct protein sequencing</keyword>
<keyword id="KW-0456">Lyase</keyword>
<keyword id="KW-0479">Metal-binding</keyword>
<keyword id="KW-0533">Nickel</keyword>
<keyword id="KW-0862">Zinc</keyword>
<feature type="initiator methionine" description="Removed" evidence="3">
    <location>
        <position position="1"/>
    </location>
</feature>
<feature type="chain" id="PRO_0000168099" description="Lactoylglutathione lyase">
    <location>
        <begin position="2"/>
        <end position="173"/>
    </location>
</feature>
<feature type="domain" description="VOC" evidence="2">
    <location>
        <begin position="24"/>
        <end position="170"/>
    </location>
</feature>
<feature type="active site" description="Proton donor/acceptor" evidence="1">
    <location>
        <position position="166"/>
    </location>
</feature>
<feature type="binding site" evidence="1">
    <location>
        <position position="27"/>
    </location>
    <ligand>
        <name>Ni(2+)</name>
        <dbReference type="ChEBI" id="CHEBI:49786"/>
    </ligand>
</feature>
<feature type="binding site" evidence="1">
    <location>
        <position position="31"/>
    </location>
    <ligand>
        <name>substrate</name>
    </ligand>
</feature>
<feature type="binding site" evidence="1">
    <location>
        <position position="93"/>
    </location>
    <ligand>
        <name>Ni(2+)</name>
        <dbReference type="ChEBI" id="CHEBI:49786"/>
    </ligand>
</feature>
<feature type="binding site" evidence="1">
    <location>
        <position position="97"/>
    </location>
    <ligand>
        <name>substrate</name>
    </ligand>
</feature>
<feature type="binding site" evidence="1">
    <location>
        <position position="116"/>
    </location>
    <ligand>
        <name>substrate</name>
    </ligand>
</feature>
<feature type="binding site" evidence="1">
    <location>
        <position position="120"/>
    </location>
    <ligand>
        <name>Ni(2+)</name>
        <dbReference type="ChEBI" id="CHEBI:49786"/>
    </ligand>
</feature>
<feature type="binding site" evidence="1">
    <location>
        <position position="120"/>
    </location>
    <ligand>
        <name>substrate</name>
    </ligand>
</feature>
<feature type="binding site" evidence="1">
    <location>
        <position position="166"/>
    </location>
    <ligand>
        <name>Ni(2+)</name>
        <dbReference type="ChEBI" id="CHEBI:49786"/>
    </ligand>
</feature>
<feature type="sequence conflict" description="In Ref. 1; BAA00248." evidence="4" ref="1">
    <original>GVTAQADPATAQFVFNHTMLRVKDIEKSLDFYTRVLGFKLVDKR</original>
    <variation>ALLPKRTLPLRNSFQPHHRARQGHREVADSIPACLVSNWWTS</variation>
    <location>
        <begin position="11"/>
        <end position="54"/>
    </location>
</feature>
<feature type="sequence conflict" description="In Ref. 1; BAA00248." evidence="4" ref="1">
    <original>H</original>
    <variation>D</variation>
    <location>
        <position position="110"/>
    </location>
</feature>
<feature type="sequence conflict" description="In Ref. 1; BAA00248." evidence="4" ref="1">
    <original>DGYWVEVIQPTPL</original>
    <variation>MVTGSK</variation>
    <location>
        <begin position="161"/>
        <end position="173"/>
    </location>
</feature>
<accession>P16635</accession>
<accession>Q52084</accession>
<dbReference type="EC" id="4.4.1.5"/>
<dbReference type="EMBL" id="D00342">
    <property type="protein sequence ID" value="BAA00248.1"/>
    <property type="molecule type" value="Genomic_DNA"/>
</dbReference>
<dbReference type="EMBL" id="L33880">
    <property type="protein sequence ID" value="AAA61758.1"/>
    <property type="molecule type" value="Genomic_DNA"/>
</dbReference>
<dbReference type="PIR" id="JU0070">
    <property type="entry name" value="WZPSLP"/>
</dbReference>
<dbReference type="SMR" id="P16635"/>
<dbReference type="BioCyc" id="MetaCyc:MONOMER-12895"/>
<dbReference type="BRENDA" id="4.4.1.5">
    <property type="organism ID" value="5092"/>
</dbReference>
<dbReference type="UniPathway" id="UPA00619">
    <property type="reaction ID" value="UER00675"/>
</dbReference>
<dbReference type="GO" id="GO:0004462">
    <property type="term" value="F:lactoylglutathione lyase activity"/>
    <property type="evidence" value="ECO:0007669"/>
    <property type="project" value="UniProtKB-EC"/>
</dbReference>
<dbReference type="GO" id="GO:0046872">
    <property type="term" value="F:metal ion binding"/>
    <property type="evidence" value="ECO:0007669"/>
    <property type="project" value="UniProtKB-KW"/>
</dbReference>
<dbReference type="CDD" id="cd07233">
    <property type="entry name" value="GlxI_Zn"/>
    <property type="match status" value="1"/>
</dbReference>
<dbReference type="Gene3D" id="3.10.180.10">
    <property type="entry name" value="2,3-Dihydroxybiphenyl 1,2-Dioxygenase, domain 1"/>
    <property type="match status" value="1"/>
</dbReference>
<dbReference type="InterPro" id="IPR029068">
    <property type="entry name" value="Glyas_Bleomycin-R_OHBP_Dase"/>
</dbReference>
<dbReference type="InterPro" id="IPR004360">
    <property type="entry name" value="Glyas_Fos-R_dOase_dom"/>
</dbReference>
<dbReference type="InterPro" id="IPR004361">
    <property type="entry name" value="Glyoxalase_1"/>
</dbReference>
<dbReference type="InterPro" id="IPR018146">
    <property type="entry name" value="Glyoxalase_1_CS"/>
</dbReference>
<dbReference type="InterPro" id="IPR037523">
    <property type="entry name" value="VOC"/>
</dbReference>
<dbReference type="NCBIfam" id="TIGR00068">
    <property type="entry name" value="glyox_I"/>
    <property type="match status" value="1"/>
</dbReference>
<dbReference type="PANTHER" id="PTHR10374:SF30">
    <property type="entry name" value="LACTOYLGLUTATHIONE LYASE"/>
    <property type="match status" value="1"/>
</dbReference>
<dbReference type="PANTHER" id="PTHR10374">
    <property type="entry name" value="LACTOYLGLUTATHIONE LYASE GLYOXALASE I"/>
    <property type="match status" value="1"/>
</dbReference>
<dbReference type="Pfam" id="PF00903">
    <property type="entry name" value="Glyoxalase"/>
    <property type="match status" value="1"/>
</dbReference>
<dbReference type="SUPFAM" id="SSF54593">
    <property type="entry name" value="Glyoxalase/Bleomycin resistance protein/Dihydroxybiphenyl dioxygenase"/>
    <property type="match status" value="1"/>
</dbReference>
<dbReference type="PROSITE" id="PS00934">
    <property type="entry name" value="GLYOXALASE_I_1"/>
    <property type="match status" value="1"/>
</dbReference>
<dbReference type="PROSITE" id="PS00935">
    <property type="entry name" value="GLYOXALASE_I_2"/>
    <property type="match status" value="1"/>
</dbReference>
<dbReference type="PROSITE" id="PS51819">
    <property type="entry name" value="VOC"/>
    <property type="match status" value="1"/>
</dbReference>
<evidence type="ECO:0000250" key="1"/>
<evidence type="ECO:0000255" key="2">
    <source>
        <dbReference type="PROSITE-ProRule" id="PRU01163"/>
    </source>
</evidence>
<evidence type="ECO:0000269" key="3">
    <source ref="1"/>
</evidence>
<evidence type="ECO:0000305" key="4"/>
<protein>
    <recommendedName>
        <fullName>Lactoylglutathione lyase</fullName>
        <ecNumber>4.4.1.5</ecNumber>
    </recommendedName>
    <alternativeName>
        <fullName>Aldoketomutase</fullName>
    </alternativeName>
    <alternativeName>
        <fullName>Glyoxalase I</fullName>
        <shortName>Glx I</shortName>
    </alternativeName>
    <alternativeName>
        <fullName>Ketone-aldehyde mutase</fullName>
    </alternativeName>
    <alternativeName>
        <fullName>Methylglyoxalase</fullName>
    </alternativeName>
    <alternativeName>
        <fullName>S-D-lactoylglutathione methylglyoxal lyase</fullName>
    </alternativeName>
</protein>
<gene>
    <name type="primary">gloA</name>
</gene>
<comment type="function">
    <text evidence="1">Catalyzes the conversion of hemimercaptal, formed from methylglyoxal and glutathione, to S-lactoylglutathione.</text>
</comment>
<comment type="catalytic activity">
    <reaction>
        <text>(R)-S-lactoylglutathione = methylglyoxal + glutathione</text>
        <dbReference type="Rhea" id="RHEA:19069"/>
        <dbReference type="ChEBI" id="CHEBI:17158"/>
        <dbReference type="ChEBI" id="CHEBI:57474"/>
        <dbReference type="ChEBI" id="CHEBI:57925"/>
        <dbReference type="EC" id="4.4.1.5"/>
    </reaction>
</comment>
<comment type="cofactor">
    <cofactor evidence="1">
        <name>Ni(2+)</name>
        <dbReference type="ChEBI" id="CHEBI:49786"/>
    </cofactor>
    <cofactor evidence="1">
        <name>Zn(2+)</name>
        <dbReference type="ChEBI" id="CHEBI:29105"/>
    </cofactor>
    <text evidence="1">Binds 1 nickel or zinc ion per subunit.</text>
</comment>
<comment type="pathway">
    <text>Secondary metabolite metabolism; methylglyoxal degradation; (R)-lactate from methylglyoxal: step 1/2.</text>
</comment>
<comment type="subunit">
    <text evidence="1">Monomer.</text>
</comment>
<comment type="similarity">
    <text evidence="4">Belongs to the glyoxalase I family.</text>
</comment>
<proteinExistence type="evidence at protein level"/>
<name>LGUL_PSEPU</name>
<sequence length="173" mass="19540">MSLNDLNTLPGVTAQADPATAQFVFNHTMLRVKDIEKSLDFYTRVLGFKLVDKRDFVEAKFSLYFLALVDPATIPADDDARHQWMKSIPGVLELTHNHGTERDADFAYHHGNTDPRGFGHICVSVPDVVAACERFEALQVPFQKRLSDGRMNHLAFIKDPDGYWVEVIQPTPL</sequence>
<organism>
    <name type="scientific">Pseudomonas putida</name>
    <name type="common">Arthrobacter siderocapsulatus</name>
    <dbReference type="NCBI Taxonomy" id="303"/>
    <lineage>
        <taxon>Bacteria</taxon>
        <taxon>Pseudomonadati</taxon>
        <taxon>Pseudomonadota</taxon>
        <taxon>Gammaproteobacteria</taxon>
        <taxon>Pseudomonadales</taxon>
        <taxon>Pseudomonadaceae</taxon>
        <taxon>Pseudomonas</taxon>
    </lineage>
</organism>
<reference key="1">
    <citation type="journal article" date="1988" name="Agric. Biol. Chem.">
        <title>Nucleotide sequence of the glyoxalase I gene of Pseudomonas putida.</title>
        <authorList>
            <person name="Rhee H."/>
            <person name="Sato N."/>
            <person name="Murata K."/>
            <person name="Kimura A."/>
        </authorList>
    </citation>
    <scope>NUCLEOTIDE SEQUENCE [GENOMIC DNA]</scope>
    <scope>PROTEIN SEQUENCE OF 2-10</scope>
    <source>
        <strain>ATCC 8209 / DSM 1693 / JCM 20511 / NBRC 3738 / NCIMB 8296 / NRRL B-1595 / NRS 77 / VKM B-899</strain>
    </source>
</reference>
<reference key="2">
    <citation type="journal article" date="1994" name="Gene">
        <title>The gene encoding glyoxalase I from Pseudomonas putida: cloning, overexpression, and sequence comparisons with human glyoxalase I.</title>
        <authorList>
            <person name="Lu T."/>
            <person name="Creighton D.J."/>
            <person name="Antoine M."/>
            <person name="Fenselau C."/>
            <person name="Lovett P.S."/>
        </authorList>
    </citation>
    <scope>NUCLEOTIDE SEQUENCE [GENOMIC DNA]</scope>
    <scope>PARTIAL PROTEIN SEQUENCE</scope>
    <scope>SEQUENCE REVISION</scope>
</reference>